<reference key="1">
    <citation type="submission" date="2007-10" db="EMBL/GenBank/DDBJ databases">
        <title>Brucella canis ATCC 23365 whole genome shotgun sequencing project.</title>
        <authorList>
            <person name="Setubal J.C."/>
            <person name="Bowns C."/>
            <person name="Boyle S."/>
            <person name="Crasta O.R."/>
            <person name="Czar M.J."/>
            <person name="Dharmanolla C."/>
            <person name="Gillespie J.J."/>
            <person name="Kenyon R.W."/>
            <person name="Lu J."/>
            <person name="Mane S."/>
            <person name="Mohapatra S."/>
            <person name="Nagrani S."/>
            <person name="Purkayastha A."/>
            <person name="Rajasimha H.K."/>
            <person name="Shallom J.M."/>
            <person name="Shallom S."/>
            <person name="Shukla M."/>
            <person name="Snyder E.E."/>
            <person name="Sobral B.W."/>
            <person name="Wattam A.R."/>
            <person name="Will R."/>
            <person name="Williams K."/>
            <person name="Yoo H."/>
            <person name="Bruce D."/>
            <person name="Detter C."/>
            <person name="Munk C."/>
            <person name="Brettin T.S."/>
        </authorList>
    </citation>
    <scope>NUCLEOTIDE SEQUENCE [LARGE SCALE GENOMIC DNA]</scope>
    <source>
        <strain>ATCC 23365 / NCTC 10854 / RM-666</strain>
    </source>
</reference>
<keyword id="KW-0997">Cell inner membrane</keyword>
<keyword id="KW-1003">Cell membrane</keyword>
<keyword id="KW-0472">Membrane</keyword>
<keyword id="KW-0520">NAD</keyword>
<keyword id="KW-0874">Quinone</keyword>
<keyword id="KW-1185">Reference proteome</keyword>
<keyword id="KW-1278">Translocase</keyword>
<keyword id="KW-0812">Transmembrane</keyword>
<keyword id="KW-1133">Transmembrane helix</keyword>
<keyword id="KW-0813">Transport</keyword>
<keyword id="KW-0830">Ubiquinone</keyword>
<feature type="chain" id="PRO_0000389973" description="NADH-quinone oxidoreductase subunit K">
    <location>
        <begin position="1"/>
        <end position="102"/>
    </location>
</feature>
<feature type="transmembrane region" description="Helical" evidence="1">
    <location>
        <begin position="5"/>
        <end position="25"/>
    </location>
</feature>
<feature type="transmembrane region" description="Helical" evidence="1">
    <location>
        <begin position="31"/>
        <end position="51"/>
    </location>
</feature>
<feature type="transmembrane region" description="Helical" evidence="1">
    <location>
        <begin position="66"/>
        <end position="86"/>
    </location>
</feature>
<dbReference type="EC" id="7.1.1.-" evidence="1"/>
<dbReference type="EMBL" id="CP000872">
    <property type="protein sequence ID" value="ABX61892.1"/>
    <property type="molecule type" value="Genomic_DNA"/>
</dbReference>
<dbReference type="RefSeq" id="WP_002963947.1">
    <property type="nucleotide sequence ID" value="NC_010103.1"/>
</dbReference>
<dbReference type="SMR" id="A9MAI9"/>
<dbReference type="GeneID" id="97533881"/>
<dbReference type="KEGG" id="bcs:BCAN_A0827"/>
<dbReference type="HOGENOM" id="CLU_144724_2_0_5"/>
<dbReference type="PhylomeDB" id="A9MAI9"/>
<dbReference type="Proteomes" id="UP000001385">
    <property type="component" value="Chromosome I"/>
</dbReference>
<dbReference type="GO" id="GO:0030964">
    <property type="term" value="C:NADH dehydrogenase complex"/>
    <property type="evidence" value="ECO:0007669"/>
    <property type="project" value="TreeGrafter"/>
</dbReference>
<dbReference type="GO" id="GO:0005886">
    <property type="term" value="C:plasma membrane"/>
    <property type="evidence" value="ECO:0007669"/>
    <property type="project" value="UniProtKB-SubCell"/>
</dbReference>
<dbReference type="GO" id="GO:0050136">
    <property type="term" value="F:NADH:ubiquinone reductase (non-electrogenic) activity"/>
    <property type="evidence" value="ECO:0007669"/>
    <property type="project" value="UniProtKB-UniRule"/>
</dbReference>
<dbReference type="GO" id="GO:0048038">
    <property type="term" value="F:quinone binding"/>
    <property type="evidence" value="ECO:0007669"/>
    <property type="project" value="UniProtKB-KW"/>
</dbReference>
<dbReference type="GO" id="GO:0042773">
    <property type="term" value="P:ATP synthesis coupled electron transport"/>
    <property type="evidence" value="ECO:0007669"/>
    <property type="project" value="InterPro"/>
</dbReference>
<dbReference type="FunFam" id="1.10.287.3510:FF:000001">
    <property type="entry name" value="NADH-quinone oxidoreductase subunit K"/>
    <property type="match status" value="1"/>
</dbReference>
<dbReference type="Gene3D" id="1.10.287.3510">
    <property type="match status" value="1"/>
</dbReference>
<dbReference type="HAMAP" id="MF_01456">
    <property type="entry name" value="NDH1_NuoK"/>
    <property type="match status" value="1"/>
</dbReference>
<dbReference type="InterPro" id="IPR001133">
    <property type="entry name" value="NADH_UbQ_OxRdtase_chain4L/K"/>
</dbReference>
<dbReference type="InterPro" id="IPR039428">
    <property type="entry name" value="NUOK/Mnh_C1-like"/>
</dbReference>
<dbReference type="NCBIfam" id="NF004320">
    <property type="entry name" value="PRK05715.1-2"/>
    <property type="match status" value="1"/>
</dbReference>
<dbReference type="NCBIfam" id="NF004321">
    <property type="entry name" value="PRK05715.1-3"/>
    <property type="match status" value="1"/>
</dbReference>
<dbReference type="NCBIfam" id="NF004323">
    <property type="entry name" value="PRK05715.1-5"/>
    <property type="match status" value="1"/>
</dbReference>
<dbReference type="PANTHER" id="PTHR11434:SF21">
    <property type="entry name" value="NADH DEHYDROGENASE SUBUNIT 4L-RELATED"/>
    <property type="match status" value="1"/>
</dbReference>
<dbReference type="PANTHER" id="PTHR11434">
    <property type="entry name" value="NADH-UBIQUINONE OXIDOREDUCTASE SUBUNIT ND4L"/>
    <property type="match status" value="1"/>
</dbReference>
<dbReference type="Pfam" id="PF00420">
    <property type="entry name" value="Oxidored_q2"/>
    <property type="match status" value="1"/>
</dbReference>
<sequence length="102" mass="10942">MEIGIAHYLTVSAILFTLGVFGIFLNRKNVIVILMSIELILLSVNLNFVAFSSQLGDLVGQVFALFVLTVAAAEAAIGLAILVVFFRNRGSIAVEDVNVMKG</sequence>
<proteinExistence type="inferred from homology"/>
<evidence type="ECO:0000255" key="1">
    <source>
        <dbReference type="HAMAP-Rule" id="MF_01456"/>
    </source>
</evidence>
<comment type="function">
    <text evidence="1">NDH-1 shuttles electrons from NADH, via FMN and iron-sulfur (Fe-S) centers, to quinones in the respiratory chain. The immediate electron acceptor for the enzyme in this species is believed to be ubiquinone. Couples the redox reaction to proton translocation (for every two electrons transferred, four hydrogen ions are translocated across the cytoplasmic membrane), and thus conserves the redox energy in a proton gradient.</text>
</comment>
<comment type="catalytic activity">
    <reaction evidence="1">
        <text>a quinone + NADH + 5 H(+)(in) = a quinol + NAD(+) + 4 H(+)(out)</text>
        <dbReference type="Rhea" id="RHEA:57888"/>
        <dbReference type="ChEBI" id="CHEBI:15378"/>
        <dbReference type="ChEBI" id="CHEBI:24646"/>
        <dbReference type="ChEBI" id="CHEBI:57540"/>
        <dbReference type="ChEBI" id="CHEBI:57945"/>
        <dbReference type="ChEBI" id="CHEBI:132124"/>
    </reaction>
</comment>
<comment type="subunit">
    <text evidence="1">NDH-1 is composed of 14 different subunits. Subunits NuoA, H, J, K, L, M, N constitute the membrane sector of the complex.</text>
</comment>
<comment type="subcellular location">
    <subcellularLocation>
        <location evidence="1">Cell inner membrane</location>
        <topology evidence="1">Multi-pass membrane protein</topology>
    </subcellularLocation>
</comment>
<comment type="similarity">
    <text evidence="1">Belongs to the complex I subunit 4L family.</text>
</comment>
<gene>
    <name evidence="1" type="primary">nuoK</name>
    <name type="ordered locus">BCAN_A0827</name>
</gene>
<name>NUOK_BRUC2</name>
<accession>A9MAI9</accession>
<protein>
    <recommendedName>
        <fullName evidence="1">NADH-quinone oxidoreductase subunit K</fullName>
        <ecNumber evidence="1">7.1.1.-</ecNumber>
    </recommendedName>
    <alternativeName>
        <fullName evidence="1">NADH dehydrogenase I subunit K</fullName>
    </alternativeName>
    <alternativeName>
        <fullName evidence="1">NDH-1 subunit K</fullName>
    </alternativeName>
</protein>
<organism>
    <name type="scientific">Brucella canis (strain ATCC 23365 / NCTC 10854 / RM-666)</name>
    <dbReference type="NCBI Taxonomy" id="483179"/>
    <lineage>
        <taxon>Bacteria</taxon>
        <taxon>Pseudomonadati</taxon>
        <taxon>Pseudomonadota</taxon>
        <taxon>Alphaproteobacteria</taxon>
        <taxon>Hyphomicrobiales</taxon>
        <taxon>Brucellaceae</taxon>
        <taxon>Brucella/Ochrobactrum group</taxon>
        <taxon>Brucella</taxon>
    </lineage>
</organism>